<accession>A0A1C3YLL7</accession>
<organism>
    <name type="scientific">Gibberella zeae (strain ATCC MYA-4620 / CBS 123657 / FGSC 9075 / NRRL 31084 / PH-1)</name>
    <name type="common">Wheat head blight fungus</name>
    <name type="synonym">Fusarium graminearum</name>
    <dbReference type="NCBI Taxonomy" id="229533"/>
    <lineage>
        <taxon>Eukaryota</taxon>
        <taxon>Fungi</taxon>
        <taxon>Dikarya</taxon>
        <taxon>Ascomycota</taxon>
        <taxon>Pezizomycotina</taxon>
        <taxon>Sordariomycetes</taxon>
        <taxon>Hypocreomycetidae</taxon>
        <taxon>Hypocreales</taxon>
        <taxon>Nectriaceae</taxon>
        <taxon>Fusarium</taxon>
    </lineage>
</organism>
<comment type="function">
    <text evidence="3 7">3-keto-steroid reductase; part of the third module of ergosterol biosynthesis pathway that includes the late steps of the pathway (By similarity). ERG27 is a catalytic component of the C-4 demethylation complex that catalyzes the conversion of 4,4-dimethylfecosterol into fecosterol via 4-methylfecosterol (By similarity). The third module or late pathway involves the ergosterol synthesis itself through consecutive reactions that mainly occur in the endoplasmic reticulum (ER) membrane. Firstly, the squalene synthase ERG9 catalyzes the condensation of 2 farnesyl pyrophosphate moieties to form squalene, which is the precursor of all steroids. Squalene synthase is crucial for balancing the incorporation of farnesyl diphosphate (FPP) into sterol and nonsterol isoprene synthesis. Secondly, squalene is converted into lanosterol by the consecutive action of the squalene epoxidase ERG1 and the lanosterol synthase ERG7. Then, the delta(24)-sterol C-methyltransferase ERG6 methylates lanosterol at C-24 to produce eburicol. Eburicol is the substrate of the sterol 14-alpha demethylase encoded by CYP51A, CYP51B and CYP51C, to yield 4,4,24-trimethyl ergosta-8,14,24(28)-trienol. CYP51B encodes the enzyme primarily responsible for sterol 14-alpha-demethylation, and plays an essential role in ascospore formation. CYP51A encodes an additional sterol 14-alpha-demethylase, induced on ergosterol depletion and responsible for the intrinsic variation in azole sensitivity. The third CYP51 isoform, CYP51C, does not encode a sterol 14-alpha-demethylase, but is required for full virulence on host wheat ears. The C-14 reductase ERG24 then reduces the C14=C15 double bond which leads to 4,4-dimethylfecosterol. A sequence of further demethylations at C-4, involving the C-4 demethylation complex containing the C-4 methylsterol oxidases ERG25, the sterol-4-alpha-carboxylate 3-dehydrogenase ERG26 and the 3-keto-steroid reductase ERG27, leads to the production of fecosterol via 4-methylfecosterol. ERG28 has a role as a scaffold to help anchor ERG25, ERG26 and ERG27 to the endoplasmic reticulum. The C-8 sterol isomerase ERG2 then catalyzes the reaction which results in unsaturation at C-7 in the B ring of sterols and thus converts fecosterol to episterol. The sterol-C5-desaturases ERG3A and ERG3BB then catalyze the introduction of a C-5 double bond in the B ring to produce 5-dehydroepisterol. The C-22 sterol desaturases ERG5A and ERG5B further convert 5-dehydroepisterol into ergosta-5,7,22,24(28)-tetraen-3beta-ol by forming the C-22(23) double bond in the sterol side chain. Finally, ergosta-5,7,22,24(28)-tetraen-3beta-ol is substrate of the C-24(28) sterol reductase ERG4 to produce ergosterol (Probable).</text>
</comment>
<comment type="pathway">
    <text evidence="7">Steroid metabolism; ergosterol biosynthesis.</text>
</comment>
<comment type="subunit">
    <text evidence="3">Heterotetramer of ERG25, ERG26, ERG27 and ERG28 (By similarity). ERG28 acts as a scaffold to tether ERG27 and other 4,4-demethylation-related enzymes, forming a demethylation enzyme complex, in the endoplasmic reticulum (By similarity).</text>
</comment>
<comment type="subcellular location">
    <subcellularLocation>
        <location evidence="3">Endoplasmic reticulum membrane</location>
        <topology evidence="3">Peripheral membrane protein</topology>
    </subcellularLocation>
    <subcellularLocation>
        <location evidence="3">Lipid droplet</location>
    </subcellularLocation>
</comment>
<comment type="induction">
    <text evidence="4">Expression is significantly higher when CYP51A is deleted or in the CYP51B/CYP51C double deletant.</text>
</comment>
<comment type="miscellaneous">
    <text evidence="4">In Fusarium, the biosynthesis pathway of the sterol precursors leading to the prevalent sterol ergosterol differs from yeast. The ringsystem of lanosterol in S.cerevisiae is firstly demethylised in three enzymatic steps leading to the intermediate zymosterol and secondly a methyl group is added to zymosterol by the sterol 24-C-methyltransferase to form fecosterol. In Fusarium, lanosterol is firstly transmethylated by the sterol 24-C-methyltransferase leading to the intermediate eburicol and secondly demethylated in three steps to form fecosterol.</text>
</comment>
<comment type="similarity">
    <text evidence="6">Belongs to the short-chain dehydrogenases/reductases (SDR) family. ERG27 subfamily.</text>
</comment>
<sequence length="475" mass="52953">MGSQLIPATAPWDSVPAQEQLFVLITGANSGIGLSIGERLIDEFLATRSLRSHLILIPTTRSKSKSLQTIKALRDYARKAAQTSQALQSRVGSSYRWQDTVARVHVLSLQVDLCDLRGVYAFADALVHGPVSNPEGLEGEYLKNVRIPRLDTVVFNAAYGGWSGVNYPKAIWVILTEGLVQSVTWPSYKMALPTARLNDKANYDYPKEPPLGEVFTACVFGHYVLAHELLPLLCRQSETETPGRLIWSSSLEAIERVLDMSDFQGFKCDGPYESAKRVTDILSLTATLPASLPSSNRFFTPDDPAEARAKPIRPRMYLTHPGIVASTLFPVPWFFMWAYELALLISRWIGSPWHNTDSYTGAKSPVWIALQEQSALDELDAERIKWGSSSNRHMQVEVKKTEVEGWGWEGKVEDAAALNADTAVGVFKKTVGRKRGAVDVTKEDIVKFEELGAESWKNMEDMRHEWENILGVKKA</sequence>
<name>ERG27_GIBZE</name>
<evidence type="ECO:0000250" key="1">
    <source>
        <dbReference type="UniProtKB" id="L0E2Z4"/>
    </source>
</evidence>
<evidence type="ECO:0000250" key="2">
    <source>
        <dbReference type="UniProtKB" id="O93868"/>
    </source>
</evidence>
<evidence type="ECO:0000250" key="3">
    <source>
        <dbReference type="UniProtKB" id="Q12452"/>
    </source>
</evidence>
<evidence type="ECO:0000269" key="4">
    <source>
    </source>
</evidence>
<evidence type="ECO:0000303" key="5">
    <source>
    </source>
</evidence>
<evidence type="ECO:0000305" key="6"/>
<evidence type="ECO:0000305" key="7">
    <source>
    </source>
</evidence>
<proteinExistence type="evidence at transcript level"/>
<dbReference type="EC" id="1.1.1.-" evidence="3"/>
<dbReference type="EMBL" id="HG970335">
    <property type="protein sequence ID" value="SCB65425.1"/>
    <property type="molecule type" value="Genomic_DNA"/>
</dbReference>
<dbReference type="FunCoup" id="A0A1C3YLL7">
    <property type="interactions" value="142"/>
</dbReference>
<dbReference type="STRING" id="229533.A0A1C3YLL7"/>
<dbReference type="VEuPathDB" id="FungiDB:FGRAMPH1_01G26961"/>
<dbReference type="eggNOG" id="KOG1478">
    <property type="taxonomic scope" value="Eukaryota"/>
</dbReference>
<dbReference type="InParanoid" id="A0A1C3YLL7"/>
<dbReference type="UniPathway" id="UPA00768"/>
<dbReference type="Proteomes" id="UP000070720">
    <property type="component" value="Chromosome 4"/>
</dbReference>
<dbReference type="GO" id="GO:0005789">
    <property type="term" value="C:endoplasmic reticulum membrane"/>
    <property type="evidence" value="ECO:0007669"/>
    <property type="project" value="UniProtKB-SubCell"/>
</dbReference>
<dbReference type="GO" id="GO:0005811">
    <property type="term" value="C:lipid droplet"/>
    <property type="evidence" value="ECO:0007669"/>
    <property type="project" value="UniProtKB-SubCell"/>
</dbReference>
<dbReference type="GO" id="GO:0005741">
    <property type="term" value="C:mitochondrial outer membrane"/>
    <property type="evidence" value="ECO:0007669"/>
    <property type="project" value="TreeGrafter"/>
</dbReference>
<dbReference type="GO" id="GO:0000253">
    <property type="term" value="F:3-beta-hydroxysteroid 3-dehydrogenase (NADP+) activity"/>
    <property type="evidence" value="ECO:0007669"/>
    <property type="project" value="TreeGrafter"/>
</dbReference>
<dbReference type="GO" id="GO:0006696">
    <property type="term" value="P:ergosterol biosynthetic process"/>
    <property type="evidence" value="ECO:0007669"/>
    <property type="project" value="TreeGrafter"/>
</dbReference>
<dbReference type="Gene3D" id="3.40.50.720">
    <property type="entry name" value="NAD(P)-binding Rossmann-like Domain"/>
    <property type="match status" value="1"/>
</dbReference>
<dbReference type="InterPro" id="IPR051593">
    <property type="entry name" value="Ergosterol_Biosynth_ERG27"/>
</dbReference>
<dbReference type="InterPro" id="IPR036291">
    <property type="entry name" value="NAD(P)-bd_dom_sf"/>
</dbReference>
<dbReference type="PANTHER" id="PTHR43647:SF1">
    <property type="entry name" value="3-KETO-STEROID REDUCTASE ERG27"/>
    <property type="match status" value="1"/>
</dbReference>
<dbReference type="PANTHER" id="PTHR43647">
    <property type="entry name" value="DEHYDROGENASE"/>
    <property type="match status" value="1"/>
</dbReference>
<dbReference type="SUPFAM" id="SSF51735">
    <property type="entry name" value="NAD(P)-binding Rossmann-fold domains"/>
    <property type="match status" value="1"/>
</dbReference>
<reference key="1">
    <citation type="journal article" date="2007" name="Science">
        <title>The Fusarium graminearum genome reveals a link between localized polymorphism and pathogen specialization.</title>
        <authorList>
            <person name="Cuomo C.A."/>
            <person name="Gueldener U."/>
            <person name="Xu J.-R."/>
            <person name="Trail F."/>
            <person name="Turgeon B.G."/>
            <person name="Di Pietro A."/>
            <person name="Walton J.D."/>
            <person name="Ma L.-J."/>
            <person name="Baker S.E."/>
            <person name="Rep M."/>
            <person name="Adam G."/>
            <person name="Antoniw J."/>
            <person name="Baldwin T."/>
            <person name="Calvo S.E."/>
            <person name="Chang Y.-L."/>
            <person name="DeCaprio D."/>
            <person name="Gale L.R."/>
            <person name="Gnerre S."/>
            <person name="Goswami R.S."/>
            <person name="Hammond-Kosack K."/>
            <person name="Harris L.J."/>
            <person name="Hilburn K."/>
            <person name="Kennell J.C."/>
            <person name="Kroken S."/>
            <person name="Magnuson J.K."/>
            <person name="Mannhaupt G."/>
            <person name="Mauceli E.W."/>
            <person name="Mewes H.-W."/>
            <person name="Mitterbauer R."/>
            <person name="Muehlbauer G."/>
            <person name="Muensterkoetter M."/>
            <person name="Nelson D."/>
            <person name="O'Donnell K."/>
            <person name="Ouellet T."/>
            <person name="Qi W."/>
            <person name="Quesneville H."/>
            <person name="Roncero M.I.G."/>
            <person name="Seong K.-Y."/>
            <person name="Tetko I.V."/>
            <person name="Urban M."/>
            <person name="Waalwijk C."/>
            <person name="Ward T.J."/>
            <person name="Yao J."/>
            <person name="Birren B.W."/>
            <person name="Kistler H.C."/>
        </authorList>
    </citation>
    <scope>NUCLEOTIDE SEQUENCE [LARGE SCALE GENOMIC DNA]</scope>
    <source>
        <strain>ATCC MYA-4620 / CBS 123657 / FGSC 9075 / NRRL 31084 / PH-1</strain>
    </source>
</reference>
<reference key="2">
    <citation type="journal article" date="2010" name="Nature">
        <title>Comparative genomics reveals mobile pathogenicity chromosomes in Fusarium.</title>
        <authorList>
            <person name="Ma L.-J."/>
            <person name="van der Does H.C."/>
            <person name="Borkovich K.A."/>
            <person name="Coleman J.J."/>
            <person name="Daboussi M.-J."/>
            <person name="Di Pietro A."/>
            <person name="Dufresne M."/>
            <person name="Freitag M."/>
            <person name="Grabherr M."/>
            <person name="Henrissat B."/>
            <person name="Houterman P.M."/>
            <person name="Kang S."/>
            <person name="Shim W.-B."/>
            <person name="Woloshuk C."/>
            <person name="Xie X."/>
            <person name="Xu J.-R."/>
            <person name="Antoniw J."/>
            <person name="Baker S.E."/>
            <person name="Bluhm B.H."/>
            <person name="Breakspear A."/>
            <person name="Brown D.W."/>
            <person name="Butchko R.A.E."/>
            <person name="Chapman S."/>
            <person name="Coulson R."/>
            <person name="Coutinho P.M."/>
            <person name="Danchin E.G.J."/>
            <person name="Diener A."/>
            <person name="Gale L.R."/>
            <person name="Gardiner D.M."/>
            <person name="Goff S."/>
            <person name="Hammond-Kosack K.E."/>
            <person name="Hilburn K."/>
            <person name="Hua-Van A."/>
            <person name="Jonkers W."/>
            <person name="Kazan K."/>
            <person name="Kodira C.D."/>
            <person name="Koehrsen M."/>
            <person name="Kumar L."/>
            <person name="Lee Y.-H."/>
            <person name="Li L."/>
            <person name="Manners J.M."/>
            <person name="Miranda-Saavedra D."/>
            <person name="Mukherjee M."/>
            <person name="Park G."/>
            <person name="Park J."/>
            <person name="Park S.-Y."/>
            <person name="Proctor R.H."/>
            <person name="Regev A."/>
            <person name="Ruiz-Roldan M.C."/>
            <person name="Sain D."/>
            <person name="Sakthikumar S."/>
            <person name="Sykes S."/>
            <person name="Schwartz D.C."/>
            <person name="Turgeon B.G."/>
            <person name="Wapinski I."/>
            <person name="Yoder O."/>
            <person name="Young S."/>
            <person name="Zeng Q."/>
            <person name="Zhou S."/>
            <person name="Galagan J."/>
            <person name="Cuomo C.A."/>
            <person name="Kistler H.C."/>
            <person name="Rep M."/>
        </authorList>
    </citation>
    <scope>GENOME REANNOTATION</scope>
    <source>
        <strain>ATCC MYA-4620 / CBS 123657 / FGSC 9075 / NRRL 31084 / PH-1</strain>
    </source>
</reference>
<reference key="3">
    <citation type="journal article" date="2015" name="BMC Genomics">
        <title>The completed genome sequence of the pathogenic ascomycete fungus Fusarium graminearum.</title>
        <authorList>
            <person name="King R."/>
            <person name="Urban M."/>
            <person name="Hammond-Kosack M.C.U."/>
            <person name="Hassani-Pak K."/>
            <person name="Hammond-Kosack K.E."/>
        </authorList>
    </citation>
    <scope>NUCLEOTIDE SEQUENCE [LARGE SCALE GENOMIC DNA]</scope>
    <source>
        <strain>ATCC MYA-4620 / CBS 123657 / FGSC 9075 / NRRL 31084 / PH-1</strain>
    </source>
</reference>
<reference key="4">
    <citation type="journal article" date="2013" name="New Phytol.">
        <title>Characterization of the sterol 14alpha-demethylases of Fusarium graminearum identifies a novel genus-specific CYP51 function.</title>
        <authorList>
            <person name="Fan J."/>
            <person name="Urban M."/>
            <person name="Parker J.E."/>
            <person name="Brewer H.C."/>
            <person name="Kelly S.L."/>
            <person name="Hammond-Kosack K.E."/>
            <person name="Fraaije B.A."/>
            <person name="Liu X."/>
            <person name="Cools H.J."/>
        </authorList>
    </citation>
    <scope>FUNCTION</scope>
    <scope>INDUCTION</scope>
    <scope>PATHWAY</scope>
</reference>
<gene>
    <name evidence="5" type="primary">ERG27</name>
    <name type="ORF">FGRAMPH1_01T26961</name>
</gene>
<protein>
    <recommendedName>
        <fullName evidence="5">3-keto-steroid reductase ERG27</fullName>
        <ecNumber evidence="3">1.1.1.-</ecNumber>
    </recommendedName>
    <alternativeName>
        <fullName evidence="5">Ergosterol biosynthetic protein 27</fullName>
    </alternativeName>
</protein>
<keyword id="KW-0256">Endoplasmic reticulum</keyword>
<keyword id="KW-0444">Lipid biosynthesis</keyword>
<keyword id="KW-0551">Lipid droplet</keyword>
<keyword id="KW-0443">Lipid metabolism</keyword>
<keyword id="KW-0472">Membrane</keyword>
<keyword id="KW-0521">NADP</keyword>
<keyword id="KW-0560">Oxidoreductase</keyword>
<keyword id="KW-1185">Reference proteome</keyword>
<keyword id="KW-0752">Steroid biosynthesis</keyword>
<feature type="chain" id="PRO_0000454365" description="3-keto-steroid reductase ERG27">
    <location>
        <begin position="1"/>
        <end position="475"/>
    </location>
</feature>
<feature type="active site" description="Proton donor" evidence="2">
    <location>
        <position position="249"/>
    </location>
</feature>
<feature type="active site" description="Proton donor" evidence="2">
    <location>
        <position position="272"/>
    </location>
</feature>
<feature type="active site" description="Lowers pKa of active site Tyr" evidence="2">
    <location>
        <position position="276"/>
    </location>
</feature>
<feature type="binding site" evidence="1">
    <location>
        <position position="32"/>
    </location>
    <ligand>
        <name>NADP(+)</name>
        <dbReference type="ChEBI" id="CHEBI:58349"/>
    </ligand>
</feature>
<feature type="binding site" evidence="1">
    <location>
        <position position="55"/>
    </location>
    <ligand>
        <name>NADP(+)</name>
        <dbReference type="ChEBI" id="CHEBI:58349"/>
    </ligand>
</feature>
<feature type="binding site" evidence="1">
    <location>
        <position position="59"/>
    </location>
    <ligand>
        <name>NADP(+)</name>
        <dbReference type="ChEBI" id="CHEBI:58349"/>
    </ligand>
</feature>
<feature type="binding site" evidence="1">
    <location>
        <position position="65"/>
    </location>
    <ligand>
        <name>NADP(+)</name>
        <dbReference type="ChEBI" id="CHEBI:58349"/>
    </ligand>
</feature>
<feature type="binding site" evidence="2">
    <location>
        <position position="272"/>
    </location>
    <ligand>
        <name>NADP(+)</name>
        <dbReference type="ChEBI" id="CHEBI:58349"/>
    </ligand>
</feature>
<feature type="binding site" evidence="2">
    <location>
        <position position="276"/>
    </location>
    <ligand>
        <name>NADP(+)</name>
        <dbReference type="ChEBI" id="CHEBI:58349"/>
    </ligand>
</feature>
<feature type="binding site" evidence="2">
    <location>
        <position position="324"/>
    </location>
    <ligand>
        <name>NADP(+)</name>
        <dbReference type="ChEBI" id="CHEBI:58349"/>
    </ligand>
</feature>
<feature type="binding site" evidence="1">
    <location>
        <position position="326"/>
    </location>
    <ligand>
        <name>NADP(+)</name>
        <dbReference type="ChEBI" id="CHEBI:58349"/>
    </ligand>
</feature>